<gene>
    <name evidence="1" type="primary">tsaD</name>
    <name type="synonym">gcp</name>
    <name type="ordered locus">SYNAS_12320</name>
    <name type="ORF">SYN_00423</name>
</gene>
<evidence type="ECO:0000255" key="1">
    <source>
        <dbReference type="HAMAP-Rule" id="MF_01445"/>
    </source>
</evidence>
<comment type="function">
    <text evidence="1">Required for the formation of a threonylcarbamoyl group on adenosine at position 37 (t(6)A37) in tRNAs that read codons beginning with adenine. Is involved in the transfer of the threonylcarbamoyl moiety of threonylcarbamoyl-AMP (TC-AMP) to the N6 group of A37, together with TsaE and TsaB. TsaD likely plays a direct catalytic role in this reaction.</text>
</comment>
<comment type="catalytic activity">
    <reaction evidence="1">
        <text>L-threonylcarbamoyladenylate + adenosine(37) in tRNA = N(6)-L-threonylcarbamoyladenosine(37) in tRNA + AMP + H(+)</text>
        <dbReference type="Rhea" id="RHEA:37059"/>
        <dbReference type="Rhea" id="RHEA-COMP:10162"/>
        <dbReference type="Rhea" id="RHEA-COMP:10163"/>
        <dbReference type="ChEBI" id="CHEBI:15378"/>
        <dbReference type="ChEBI" id="CHEBI:73682"/>
        <dbReference type="ChEBI" id="CHEBI:74411"/>
        <dbReference type="ChEBI" id="CHEBI:74418"/>
        <dbReference type="ChEBI" id="CHEBI:456215"/>
        <dbReference type="EC" id="2.3.1.234"/>
    </reaction>
</comment>
<comment type="cofactor">
    <cofactor evidence="1">
        <name>Fe(2+)</name>
        <dbReference type="ChEBI" id="CHEBI:29033"/>
    </cofactor>
    <text evidence="1">Binds 1 Fe(2+) ion per subunit.</text>
</comment>
<comment type="subcellular location">
    <subcellularLocation>
        <location evidence="1">Cytoplasm</location>
    </subcellularLocation>
</comment>
<comment type="similarity">
    <text evidence="1">Belongs to the KAE1 / TsaD family.</text>
</comment>
<sequence>MIVLGIESSCDETAAAVVRDGRVLLSNVIASQIGEHSKYGGVVPEIASRKHIEAVIPVILQALHDAGMELSDIEGIAVTRGPGLVGSLLVGLSVAKALAFSRKLPLVGIHHLEGHIAAIFLSEKVPEFPFIALVVSGGHTNIYFVRGFGLFTLLGQTRDDAAGEAFDKAAKLLNIGYPGGVVIDRLAKEGDRNLLNFPRAMKESLDFSFSGLKTSLLVHVKKHGSPSAREDLAHLVAAYQEAIVDVLVEKTLKAAKMNSVPQVVVCGGVASNSRLREHFMERSREENIDLFIPPPVLCTDNAAMIAVVGENLLNKGKSEELSINAVSRWPLDVAGSFR</sequence>
<proteinExistence type="inferred from homology"/>
<name>TSAD_SYNAS</name>
<organism>
    <name type="scientific">Syntrophus aciditrophicus (strain SB)</name>
    <dbReference type="NCBI Taxonomy" id="56780"/>
    <lineage>
        <taxon>Bacteria</taxon>
        <taxon>Pseudomonadati</taxon>
        <taxon>Thermodesulfobacteriota</taxon>
        <taxon>Syntrophia</taxon>
        <taxon>Syntrophales</taxon>
        <taxon>Syntrophaceae</taxon>
        <taxon>Syntrophus</taxon>
    </lineage>
</organism>
<keyword id="KW-0012">Acyltransferase</keyword>
<keyword id="KW-0963">Cytoplasm</keyword>
<keyword id="KW-0408">Iron</keyword>
<keyword id="KW-0479">Metal-binding</keyword>
<keyword id="KW-1185">Reference proteome</keyword>
<keyword id="KW-0808">Transferase</keyword>
<keyword id="KW-0819">tRNA processing</keyword>
<reference key="1">
    <citation type="journal article" date="2007" name="Proc. Natl. Acad. Sci. U.S.A.">
        <title>The genome of Syntrophus aciditrophicus: life at the thermodynamic limit of microbial growth.</title>
        <authorList>
            <person name="McInerney M.J."/>
            <person name="Rohlin L."/>
            <person name="Mouttaki H."/>
            <person name="Kim U."/>
            <person name="Krupp R.S."/>
            <person name="Rios-Hernandez L."/>
            <person name="Sieber J."/>
            <person name="Struchtemeyer C.G."/>
            <person name="Bhattacharyya A."/>
            <person name="Campbell J.W."/>
            <person name="Gunsalus R.P."/>
        </authorList>
    </citation>
    <scope>NUCLEOTIDE SEQUENCE [LARGE SCALE GENOMIC DNA]</scope>
    <source>
        <strain>SB</strain>
    </source>
</reference>
<dbReference type="EC" id="2.3.1.234" evidence="1"/>
<dbReference type="EMBL" id="CP000252">
    <property type="protein sequence ID" value="ABC77111.1"/>
    <property type="molecule type" value="Genomic_DNA"/>
</dbReference>
<dbReference type="RefSeq" id="WP_011417140.1">
    <property type="nucleotide sequence ID" value="NC_007759.1"/>
</dbReference>
<dbReference type="SMR" id="Q2LSP8"/>
<dbReference type="FunCoup" id="Q2LSP8">
    <property type="interactions" value="481"/>
</dbReference>
<dbReference type="STRING" id="56780.SYN_00423"/>
<dbReference type="KEGG" id="sat:SYN_00423"/>
<dbReference type="eggNOG" id="COG0533">
    <property type="taxonomic scope" value="Bacteria"/>
</dbReference>
<dbReference type="HOGENOM" id="CLU_023208_0_2_7"/>
<dbReference type="InParanoid" id="Q2LSP8"/>
<dbReference type="OrthoDB" id="9806197at2"/>
<dbReference type="Proteomes" id="UP000001933">
    <property type="component" value="Chromosome"/>
</dbReference>
<dbReference type="GO" id="GO:0005737">
    <property type="term" value="C:cytoplasm"/>
    <property type="evidence" value="ECO:0007669"/>
    <property type="project" value="UniProtKB-SubCell"/>
</dbReference>
<dbReference type="GO" id="GO:0005506">
    <property type="term" value="F:iron ion binding"/>
    <property type="evidence" value="ECO:0007669"/>
    <property type="project" value="UniProtKB-UniRule"/>
</dbReference>
<dbReference type="GO" id="GO:0061711">
    <property type="term" value="F:N(6)-L-threonylcarbamoyladenine synthase activity"/>
    <property type="evidence" value="ECO:0007669"/>
    <property type="project" value="UniProtKB-EC"/>
</dbReference>
<dbReference type="GO" id="GO:0002949">
    <property type="term" value="P:tRNA threonylcarbamoyladenosine modification"/>
    <property type="evidence" value="ECO:0007669"/>
    <property type="project" value="UniProtKB-UniRule"/>
</dbReference>
<dbReference type="CDD" id="cd24133">
    <property type="entry name" value="ASKHA_NBD_TsaD_bac"/>
    <property type="match status" value="1"/>
</dbReference>
<dbReference type="FunFam" id="3.30.420.40:FF:000012">
    <property type="entry name" value="tRNA N6-adenosine threonylcarbamoyltransferase"/>
    <property type="match status" value="1"/>
</dbReference>
<dbReference type="FunFam" id="3.30.420.40:FF:000040">
    <property type="entry name" value="tRNA N6-adenosine threonylcarbamoyltransferase"/>
    <property type="match status" value="1"/>
</dbReference>
<dbReference type="Gene3D" id="3.30.420.40">
    <property type="match status" value="2"/>
</dbReference>
<dbReference type="HAMAP" id="MF_01445">
    <property type="entry name" value="TsaD"/>
    <property type="match status" value="1"/>
</dbReference>
<dbReference type="InterPro" id="IPR043129">
    <property type="entry name" value="ATPase_NBD"/>
</dbReference>
<dbReference type="InterPro" id="IPR000905">
    <property type="entry name" value="Gcp-like_dom"/>
</dbReference>
<dbReference type="InterPro" id="IPR017861">
    <property type="entry name" value="KAE1/TsaD"/>
</dbReference>
<dbReference type="InterPro" id="IPR022450">
    <property type="entry name" value="TsaD"/>
</dbReference>
<dbReference type="NCBIfam" id="TIGR00329">
    <property type="entry name" value="gcp_kae1"/>
    <property type="match status" value="1"/>
</dbReference>
<dbReference type="NCBIfam" id="TIGR03723">
    <property type="entry name" value="T6A_TsaD_YgjD"/>
    <property type="match status" value="1"/>
</dbReference>
<dbReference type="PANTHER" id="PTHR11735">
    <property type="entry name" value="TRNA N6-ADENOSINE THREONYLCARBAMOYLTRANSFERASE"/>
    <property type="match status" value="1"/>
</dbReference>
<dbReference type="PANTHER" id="PTHR11735:SF6">
    <property type="entry name" value="TRNA N6-ADENOSINE THREONYLCARBAMOYLTRANSFERASE, MITOCHONDRIAL"/>
    <property type="match status" value="1"/>
</dbReference>
<dbReference type="Pfam" id="PF00814">
    <property type="entry name" value="TsaD"/>
    <property type="match status" value="1"/>
</dbReference>
<dbReference type="PRINTS" id="PR00789">
    <property type="entry name" value="OSIALOPTASE"/>
</dbReference>
<dbReference type="SUPFAM" id="SSF53067">
    <property type="entry name" value="Actin-like ATPase domain"/>
    <property type="match status" value="1"/>
</dbReference>
<feature type="chain" id="PRO_0000303592" description="tRNA N6-adenosine threonylcarbamoyltransferase">
    <location>
        <begin position="1"/>
        <end position="338"/>
    </location>
</feature>
<feature type="binding site" evidence="1">
    <location>
        <position position="111"/>
    </location>
    <ligand>
        <name>Fe cation</name>
        <dbReference type="ChEBI" id="CHEBI:24875"/>
    </ligand>
</feature>
<feature type="binding site" evidence="1">
    <location>
        <position position="115"/>
    </location>
    <ligand>
        <name>Fe cation</name>
        <dbReference type="ChEBI" id="CHEBI:24875"/>
    </ligand>
</feature>
<feature type="binding site" evidence="1">
    <location>
        <begin position="134"/>
        <end position="138"/>
    </location>
    <ligand>
        <name>substrate</name>
    </ligand>
</feature>
<feature type="binding site" evidence="1">
    <location>
        <position position="167"/>
    </location>
    <ligand>
        <name>substrate</name>
    </ligand>
</feature>
<feature type="binding site" evidence="1">
    <location>
        <position position="180"/>
    </location>
    <ligand>
        <name>substrate</name>
    </ligand>
</feature>
<feature type="binding site" evidence="1">
    <location>
        <position position="184"/>
    </location>
    <ligand>
        <name>substrate</name>
    </ligand>
</feature>
<feature type="binding site" evidence="1">
    <location>
        <position position="272"/>
    </location>
    <ligand>
        <name>substrate</name>
    </ligand>
</feature>
<feature type="binding site" evidence="1">
    <location>
        <position position="300"/>
    </location>
    <ligand>
        <name>Fe cation</name>
        <dbReference type="ChEBI" id="CHEBI:24875"/>
    </ligand>
</feature>
<accession>Q2LSP8</accession>
<protein>
    <recommendedName>
        <fullName evidence="1">tRNA N6-adenosine threonylcarbamoyltransferase</fullName>
        <ecNumber evidence="1">2.3.1.234</ecNumber>
    </recommendedName>
    <alternativeName>
        <fullName evidence="1">N6-L-threonylcarbamoyladenine synthase</fullName>
        <shortName evidence="1">t(6)A synthase</shortName>
    </alternativeName>
    <alternativeName>
        <fullName evidence="1">t(6)A37 threonylcarbamoyladenosine biosynthesis protein TsaD</fullName>
    </alternativeName>
    <alternativeName>
        <fullName evidence="1">tRNA threonylcarbamoyladenosine biosynthesis protein TsaD</fullName>
    </alternativeName>
</protein>